<comment type="subcellular location">
    <subcellularLocation>
        <location evidence="4">Nucleus</location>
    </subcellularLocation>
</comment>
<comment type="developmental stage">
    <text evidence="3">Expressed both maternally and zygotically. Present throughout the preblastoderm and remains at a high level during syncytial divisions. From cellularization, expression decreases and at cellular blastoderm maternal expression has nearly completely disappeared.</text>
</comment>
<comment type="induction">
    <text evidence="3">The zygotic transcript but not the maternal transcript is moderately induced by forskolin and tetradecanoyl phorbol acetate.</text>
</comment>
<feature type="chain" id="PRO_0000089172" description="Protein TIS11">
    <location>
        <begin position="1"/>
        <end position="436"/>
    </location>
</feature>
<feature type="zinc finger region" description="C3H1-type 1" evidence="1">
    <location>
        <begin position="135"/>
        <end position="163"/>
    </location>
</feature>
<feature type="zinc finger region" description="C3H1-type 2" evidence="1">
    <location>
        <begin position="173"/>
        <end position="201"/>
    </location>
</feature>
<feature type="region of interest" description="Disordered" evidence="2">
    <location>
        <begin position="205"/>
        <end position="295"/>
    </location>
</feature>
<feature type="compositionally biased region" description="Low complexity" evidence="2">
    <location>
        <begin position="205"/>
        <end position="250"/>
    </location>
</feature>
<feature type="sequence conflict" description="In Ref. 2; CAA57066." evidence="4" ref="2">
    <original>S</original>
    <variation>A</variation>
    <location>
        <position position="15"/>
    </location>
</feature>
<feature type="sequence conflict" description="In Ref. 1; AAA62666." evidence="4" ref="1">
    <original>PA</original>
    <variation>QPP</variation>
    <location>
        <begin position="96"/>
        <end position="97"/>
    </location>
</feature>
<reference key="1">
    <citation type="journal article" date="1994" name="Oncogene">
        <title>The Drosophila TIS11 homologue encodes a developmentally controlled gene.</title>
        <authorList>
            <person name="Ma Q."/>
            <person name="Wadleigh D."/>
            <person name="Chi T."/>
            <person name="Herschman H."/>
        </authorList>
    </citation>
    <scope>NUCLEOTIDE SEQUENCE [MRNA]</scope>
    <scope>DEVELOPMENTAL STAGE</scope>
    <scope>INDUCTION</scope>
    <source>
        <strain>Oregon-R</strain>
        <tissue>Eye imaginal disk</tissue>
        <tissue>Larva</tissue>
    </source>
</reference>
<reference key="2">
    <citation type="journal article" date="1994" name="Gene">
        <title>A Drosophila melanogaster homolog of the TIS11 family of immediate early genes that can rescue a cdr1 cdc25 mutant strain of fission yeast.</title>
        <authorList>
            <person name="Warbrick E."/>
            <person name="Glover D."/>
        </authorList>
    </citation>
    <scope>NUCLEOTIDE SEQUENCE [MRNA]</scope>
    <source>
        <strain>Oregon-R</strain>
        <tissue>Embryo</tissue>
    </source>
</reference>
<reference key="3">
    <citation type="journal article" date="2000" name="Science">
        <title>The genome sequence of Drosophila melanogaster.</title>
        <authorList>
            <person name="Adams M.D."/>
            <person name="Celniker S.E."/>
            <person name="Holt R.A."/>
            <person name="Evans C.A."/>
            <person name="Gocayne J.D."/>
            <person name="Amanatides P.G."/>
            <person name="Scherer S.E."/>
            <person name="Li P.W."/>
            <person name="Hoskins R.A."/>
            <person name="Galle R.F."/>
            <person name="George R.A."/>
            <person name="Lewis S.E."/>
            <person name="Richards S."/>
            <person name="Ashburner M."/>
            <person name="Henderson S.N."/>
            <person name="Sutton G.G."/>
            <person name="Wortman J.R."/>
            <person name="Yandell M.D."/>
            <person name="Zhang Q."/>
            <person name="Chen L.X."/>
            <person name="Brandon R.C."/>
            <person name="Rogers Y.-H.C."/>
            <person name="Blazej R.G."/>
            <person name="Champe M."/>
            <person name="Pfeiffer B.D."/>
            <person name="Wan K.H."/>
            <person name="Doyle C."/>
            <person name="Baxter E.G."/>
            <person name="Helt G."/>
            <person name="Nelson C.R."/>
            <person name="Miklos G.L.G."/>
            <person name="Abril J.F."/>
            <person name="Agbayani A."/>
            <person name="An H.-J."/>
            <person name="Andrews-Pfannkoch C."/>
            <person name="Baldwin D."/>
            <person name="Ballew R.M."/>
            <person name="Basu A."/>
            <person name="Baxendale J."/>
            <person name="Bayraktaroglu L."/>
            <person name="Beasley E.M."/>
            <person name="Beeson K.Y."/>
            <person name="Benos P.V."/>
            <person name="Berman B.P."/>
            <person name="Bhandari D."/>
            <person name="Bolshakov S."/>
            <person name="Borkova D."/>
            <person name="Botchan M.R."/>
            <person name="Bouck J."/>
            <person name="Brokstein P."/>
            <person name="Brottier P."/>
            <person name="Burtis K.C."/>
            <person name="Busam D.A."/>
            <person name="Butler H."/>
            <person name="Cadieu E."/>
            <person name="Center A."/>
            <person name="Chandra I."/>
            <person name="Cherry J.M."/>
            <person name="Cawley S."/>
            <person name="Dahlke C."/>
            <person name="Davenport L.B."/>
            <person name="Davies P."/>
            <person name="de Pablos B."/>
            <person name="Delcher A."/>
            <person name="Deng Z."/>
            <person name="Mays A.D."/>
            <person name="Dew I."/>
            <person name="Dietz S.M."/>
            <person name="Dodson K."/>
            <person name="Doup L.E."/>
            <person name="Downes M."/>
            <person name="Dugan-Rocha S."/>
            <person name="Dunkov B.C."/>
            <person name="Dunn P."/>
            <person name="Durbin K.J."/>
            <person name="Evangelista C.C."/>
            <person name="Ferraz C."/>
            <person name="Ferriera S."/>
            <person name="Fleischmann W."/>
            <person name="Fosler C."/>
            <person name="Gabrielian A.E."/>
            <person name="Garg N.S."/>
            <person name="Gelbart W.M."/>
            <person name="Glasser K."/>
            <person name="Glodek A."/>
            <person name="Gong F."/>
            <person name="Gorrell J.H."/>
            <person name="Gu Z."/>
            <person name="Guan P."/>
            <person name="Harris M."/>
            <person name="Harris N.L."/>
            <person name="Harvey D.A."/>
            <person name="Heiman T.J."/>
            <person name="Hernandez J.R."/>
            <person name="Houck J."/>
            <person name="Hostin D."/>
            <person name="Houston K.A."/>
            <person name="Howland T.J."/>
            <person name="Wei M.-H."/>
            <person name="Ibegwam C."/>
            <person name="Jalali M."/>
            <person name="Kalush F."/>
            <person name="Karpen G.H."/>
            <person name="Ke Z."/>
            <person name="Kennison J.A."/>
            <person name="Ketchum K.A."/>
            <person name="Kimmel B.E."/>
            <person name="Kodira C.D."/>
            <person name="Kraft C.L."/>
            <person name="Kravitz S."/>
            <person name="Kulp D."/>
            <person name="Lai Z."/>
            <person name="Lasko P."/>
            <person name="Lei Y."/>
            <person name="Levitsky A.A."/>
            <person name="Li J.H."/>
            <person name="Li Z."/>
            <person name="Liang Y."/>
            <person name="Lin X."/>
            <person name="Liu X."/>
            <person name="Mattei B."/>
            <person name="McIntosh T.C."/>
            <person name="McLeod M.P."/>
            <person name="McPherson D."/>
            <person name="Merkulov G."/>
            <person name="Milshina N.V."/>
            <person name="Mobarry C."/>
            <person name="Morris J."/>
            <person name="Moshrefi A."/>
            <person name="Mount S.M."/>
            <person name="Moy M."/>
            <person name="Murphy B."/>
            <person name="Murphy L."/>
            <person name="Muzny D.M."/>
            <person name="Nelson D.L."/>
            <person name="Nelson D.R."/>
            <person name="Nelson K.A."/>
            <person name="Nixon K."/>
            <person name="Nusskern D.R."/>
            <person name="Pacleb J.M."/>
            <person name="Palazzolo M."/>
            <person name="Pittman G.S."/>
            <person name="Pan S."/>
            <person name="Pollard J."/>
            <person name="Puri V."/>
            <person name="Reese M.G."/>
            <person name="Reinert K."/>
            <person name="Remington K."/>
            <person name="Saunders R.D.C."/>
            <person name="Scheeler F."/>
            <person name="Shen H."/>
            <person name="Shue B.C."/>
            <person name="Siden-Kiamos I."/>
            <person name="Simpson M."/>
            <person name="Skupski M.P."/>
            <person name="Smith T.J."/>
            <person name="Spier E."/>
            <person name="Spradling A.C."/>
            <person name="Stapleton M."/>
            <person name="Strong R."/>
            <person name="Sun E."/>
            <person name="Svirskas R."/>
            <person name="Tector C."/>
            <person name="Turner R."/>
            <person name="Venter E."/>
            <person name="Wang A.H."/>
            <person name="Wang X."/>
            <person name="Wang Z.-Y."/>
            <person name="Wassarman D.A."/>
            <person name="Weinstock G.M."/>
            <person name="Weissenbach J."/>
            <person name="Williams S.M."/>
            <person name="Woodage T."/>
            <person name="Worley K.C."/>
            <person name="Wu D."/>
            <person name="Yang S."/>
            <person name="Yao Q.A."/>
            <person name="Ye J."/>
            <person name="Yeh R.-F."/>
            <person name="Zaveri J.S."/>
            <person name="Zhan M."/>
            <person name="Zhang G."/>
            <person name="Zhao Q."/>
            <person name="Zheng L."/>
            <person name="Zheng X.H."/>
            <person name="Zhong F.N."/>
            <person name="Zhong W."/>
            <person name="Zhou X."/>
            <person name="Zhu S.C."/>
            <person name="Zhu X."/>
            <person name="Smith H.O."/>
            <person name="Gibbs R.A."/>
            <person name="Myers E.W."/>
            <person name="Rubin G.M."/>
            <person name="Venter J.C."/>
        </authorList>
    </citation>
    <scope>NUCLEOTIDE SEQUENCE [LARGE SCALE GENOMIC DNA]</scope>
    <source>
        <strain>Berkeley</strain>
    </source>
</reference>
<reference key="4">
    <citation type="journal article" date="2002" name="Genome Biol.">
        <title>Annotation of the Drosophila melanogaster euchromatic genome: a systematic review.</title>
        <authorList>
            <person name="Misra S."/>
            <person name="Crosby M.A."/>
            <person name="Mungall C.J."/>
            <person name="Matthews B.B."/>
            <person name="Campbell K.S."/>
            <person name="Hradecky P."/>
            <person name="Huang Y."/>
            <person name="Kaminker J.S."/>
            <person name="Millburn G.H."/>
            <person name="Prochnik S.E."/>
            <person name="Smith C.D."/>
            <person name="Tupy J.L."/>
            <person name="Whitfield E.J."/>
            <person name="Bayraktaroglu L."/>
            <person name="Berman B.P."/>
            <person name="Bettencourt B.R."/>
            <person name="Celniker S.E."/>
            <person name="de Grey A.D.N.J."/>
            <person name="Drysdale R.A."/>
            <person name="Harris N.L."/>
            <person name="Richter J."/>
            <person name="Russo S."/>
            <person name="Schroeder A.J."/>
            <person name="Shu S.Q."/>
            <person name="Stapleton M."/>
            <person name="Yamada C."/>
            <person name="Ashburner M."/>
            <person name="Gelbart W.M."/>
            <person name="Rubin G.M."/>
            <person name="Lewis S.E."/>
        </authorList>
    </citation>
    <scope>GENOME REANNOTATION</scope>
    <source>
        <strain>Berkeley</strain>
    </source>
</reference>
<gene>
    <name type="primary">Tis11</name>
    <name type="synonym">TIScc1</name>
    <name type="ORF">CG4070</name>
</gene>
<accession>P47980</accession>
<accession>Q8IR77</accession>
<accession>Q9VYK1</accession>
<evidence type="ECO:0000255" key="1">
    <source>
        <dbReference type="PROSITE-ProRule" id="PRU00723"/>
    </source>
</evidence>
<evidence type="ECO:0000256" key="2">
    <source>
        <dbReference type="SAM" id="MobiDB-lite"/>
    </source>
</evidence>
<evidence type="ECO:0000269" key="3">
    <source>
    </source>
</evidence>
<evidence type="ECO:0000305" key="4"/>
<sequence>MSADILQKSREQDDSHYFERGDISKYVTMNDHLGDFDCNEVRKEIRMLLAHGANLDQQHQQQPHRHHGGLTRTISQPAQLIQQQQQQHQQQQQQQPAVASLVTITENLGNMNLHRKLERTQSEPLPPQQPMNTSRYKTELCRPFEEAGECKYGEKCQFAHGSHELRNVHRHPKYKTEYCRTFHSVGFCPYGPRCHFVHNADEARAQQAAQAAKSSTQSQSQSQQSSSQNFSPKSNQSSNQSSNSSSSSSSSGGGGGGGNSINNNNGSQFYLPLSPPLSMSTGSDRESPTGSLSLSPTNSLTSFPFHDALQHGYLASNGAKSNSSASSTSSASGMGLGMSMGIGQGMIIGQGLGMGHHGPATPPESPNVPISPVHTPPPYDVVVSGSGAGNNSVGSKQLLQKSVSTPMQQEDTPRLPVFNRLSSGVEAYQQQSNLGL</sequence>
<proteinExistence type="evidence at transcript level"/>
<dbReference type="EMBL" id="U13397">
    <property type="protein sequence ID" value="AAA62666.1"/>
    <property type="molecule type" value="mRNA"/>
</dbReference>
<dbReference type="EMBL" id="X81194">
    <property type="protein sequence ID" value="CAA57066.1"/>
    <property type="molecule type" value="mRNA"/>
</dbReference>
<dbReference type="EMBL" id="AE014298">
    <property type="protein sequence ID" value="AAF48194.2"/>
    <property type="molecule type" value="Genomic_DNA"/>
</dbReference>
<dbReference type="EMBL" id="AE014298">
    <property type="protein sequence ID" value="AAN09314.2"/>
    <property type="molecule type" value="Genomic_DNA"/>
</dbReference>
<dbReference type="RefSeq" id="NP_001259490.1">
    <property type="nucleotide sequence ID" value="NM_001272561.2"/>
</dbReference>
<dbReference type="RefSeq" id="NP_511141.2">
    <property type="nucleotide sequence ID" value="NM_078586.5"/>
</dbReference>
<dbReference type="RefSeq" id="NP_727633.2">
    <property type="nucleotide sequence ID" value="NM_167333.4"/>
</dbReference>
<dbReference type="SMR" id="P47980"/>
<dbReference type="BioGRID" id="58616">
    <property type="interactions" value="8"/>
</dbReference>
<dbReference type="FunCoup" id="P47980">
    <property type="interactions" value="394"/>
</dbReference>
<dbReference type="IntAct" id="P47980">
    <property type="interactions" value="9"/>
</dbReference>
<dbReference type="STRING" id="7227.FBpp0305898"/>
<dbReference type="PaxDb" id="7227-FBpp0073516"/>
<dbReference type="DNASU" id="32222"/>
<dbReference type="EnsemblMetazoa" id="FBtr0073683">
    <property type="protein sequence ID" value="FBpp0073516"/>
    <property type="gene ID" value="FBgn0011837"/>
</dbReference>
<dbReference type="EnsemblMetazoa" id="FBtr0333756">
    <property type="protein sequence ID" value="FBpp0305898"/>
    <property type="gene ID" value="FBgn0011837"/>
</dbReference>
<dbReference type="EnsemblMetazoa" id="FBtr0345165">
    <property type="protein sequence ID" value="FBpp0311375"/>
    <property type="gene ID" value="FBgn0011837"/>
</dbReference>
<dbReference type="GeneID" id="32222"/>
<dbReference type="KEGG" id="dme:Dmel_CG4070"/>
<dbReference type="AGR" id="FB:FBgn0011837"/>
<dbReference type="CTD" id="32222"/>
<dbReference type="FlyBase" id="FBgn0011837">
    <property type="gene designation" value="Tis11"/>
</dbReference>
<dbReference type="VEuPathDB" id="VectorBase:FBgn0011837"/>
<dbReference type="eggNOG" id="KOG1677">
    <property type="taxonomic scope" value="Eukaryota"/>
</dbReference>
<dbReference type="GeneTree" id="ENSGT00940000170800"/>
<dbReference type="HOGENOM" id="CLU_669507_0_0_1"/>
<dbReference type="InParanoid" id="P47980"/>
<dbReference type="OMA" id="PMNISRY"/>
<dbReference type="OrthoDB" id="410307at2759"/>
<dbReference type="PhylomeDB" id="P47980"/>
<dbReference type="Reactome" id="R-DME-450385">
    <property type="pathway name" value="Butyrate Response Factor 1 (BRF1) binds and destabilizes mRNA"/>
</dbReference>
<dbReference type="Reactome" id="R-DME-450513">
    <property type="pathway name" value="Tristetraprolin (TTP, ZFP36) binds and destabilizes mRNA"/>
</dbReference>
<dbReference type="BioGRID-ORCS" id="32222">
    <property type="hits" value="0 hits in 3 CRISPR screens"/>
</dbReference>
<dbReference type="ChiTaRS" id="Tis11">
    <property type="organism name" value="fly"/>
</dbReference>
<dbReference type="GenomeRNAi" id="32222"/>
<dbReference type="PRO" id="PR:P47980"/>
<dbReference type="Proteomes" id="UP000000803">
    <property type="component" value="Chromosome X"/>
</dbReference>
<dbReference type="Bgee" id="FBgn0011837">
    <property type="expression patterns" value="Expressed in dorsal appendage forming follicle cell in ovary and 195 other cell types or tissues"/>
</dbReference>
<dbReference type="ExpressionAtlas" id="P47980">
    <property type="expression patterns" value="baseline and differential"/>
</dbReference>
<dbReference type="GO" id="GO:0005829">
    <property type="term" value="C:cytosol"/>
    <property type="evidence" value="ECO:0007005"/>
    <property type="project" value="FlyBase"/>
</dbReference>
<dbReference type="GO" id="GO:0005634">
    <property type="term" value="C:nucleus"/>
    <property type="evidence" value="ECO:0007669"/>
    <property type="project" value="UniProtKB-SubCell"/>
</dbReference>
<dbReference type="GO" id="GO:0003677">
    <property type="term" value="F:DNA binding"/>
    <property type="evidence" value="ECO:0007669"/>
    <property type="project" value="UniProtKB-KW"/>
</dbReference>
<dbReference type="GO" id="GO:0035925">
    <property type="term" value="F:mRNA 3'-UTR AU-rich region binding"/>
    <property type="evidence" value="ECO:0000314"/>
    <property type="project" value="FlyBase"/>
</dbReference>
<dbReference type="GO" id="GO:0003730">
    <property type="term" value="F:mRNA 3'-UTR binding"/>
    <property type="evidence" value="ECO:0000314"/>
    <property type="project" value="FlyBase"/>
</dbReference>
<dbReference type="GO" id="GO:0008270">
    <property type="term" value="F:zinc ion binding"/>
    <property type="evidence" value="ECO:0007669"/>
    <property type="project" value="UniProtKB-KW"/>
</dbReference>
<dbReference type="GO" id="GO:0061158">
    <property type="term" value="P:3'-UTR-mediated mRNA destabilization"/>
    <property type="evidence" value="ECO:0000314"/>
    <property type="project" value="FlyBase"/>
</dbReference>
<dbReference type="GO" id="GO:0010629">
    <property type="term" value="P:negative regulation of gene expression"/>
    <property type="evidence" value="ECO:0000314"/>
    <property type="project" value="FlyBase"/>
</dbReference>
<dbReference type="GO" id="GO:1900153">
    <property type="term" value="P:positive regulation of nuclear-transcribed mRNA catabolic process, deadenylation-dependent decay"/>
    <property type="evidence" value="ECO:0000315"/>
    <property type="project" value="FlyBase"/>
</dbReference>
<dbReference type="GO" id="GO:0035194">
    <property type="term" value="P:regulatory ncRNA-mediated post-transcriptional gene silencing"/>
    <property type="evidence" value="ECO:0000315"/>
    <property type="project" value="FlyBase"/>
</dbReference>
<dbReference type="FunFam" id="4.10.1000.10:FF:000001">
    <property type="entry name" value="zinc finger CCCH domain-containing protein 15-like"/>
    <property type="match status" value="1"/>
</dbReference>
<dbReference type="FunFam" id="4.10.1000.10:FF:000002">
    <property type="entry name" value="Zinc finger protein 36, C3H1 type-like 1"/>
    <property type="match status" value="1"/>
</dbReference>
<dbReference type="Gene3D" id="4.10.1000.10">
    <property type="entry name" value="Zinc finger, CCCH-type"/>
    <property type="match status" value="2"/>
</dbReference>
<dbReference type="InterPro" id="IPR045877">
    <property type="entry name" value="ZFP36-like"/>
</dbReference>
<dbReference type="InterPro" id="IPR000571">
    <property type="entry name" value="Znf_CCCH"/>
</dbReference>
<dbReference type="InterPro" id="IPR036855">
    <property type="entry name" value="Znf_CCCH_sf"/>
</dbReference>
<dbReference type="PANTHER" id="PTHR12547">
    <property type="entry name" value="CCCH ZINC FINGER/TIS11-RELATED"/>
    <property type="match status" value="1"/>
</dbReference>
<dbReference type="PANTHER" id="PTHR12547:SF18">
    <property type="entry name" value="PROTEIN TIS11"/>
    <property type="match status" value="1"/>
</dbReference>
<dbReference type="Pfam" id="PF00642">
    <property type="entry name" value="zf-CCCH"/>
    <property type="match status" value="2"/>
</dbReference>
<dbReference type="SMART" id="SM00356">
    <property type="entry name" value="ZnF_C3H1"/>
    <property type="match status" value="2"/>
</dbReference>
<dbReference type="SUPFAM" id="SSF90229">
    <property type="entry name" value="CCCH zinc finger"/>
    <property type="match status" value="2"/>
</dbReference>
<dbReference type="PROSITE" id="PS50103">
    <property type="entry name" value="ZF_C3H1"/>
    <property type="match status" value="2"/>
</dbReference>
<keyword id="KW-0238">DNA-binding</keyword>
<keyword id="KW-0479">Metal-binding</keyword>
<keyword id="KW-0539">Nucleus</keyword>
<keyword id="KW-1185">Reference proteome</keyword>
<keyword id="KW-0677">Repeat</keyword>
<keyword id="KW-0862">Zinc</keyword>
<keyword id="KW-0863">Zinc-finger</keyword>
<name>TIS11_DROME</name>
<organism>
    <name type="scientific">Drosophila melanogaster</name>
    <name type="common">Fruit fly</name>
    <dbReference type="NCBI Taxonomy" id="7227"/>
    <lineage>
        <taxon>Eukaryota</taxon>
        <taxon>Metazoa</taxon>
        <taxon>Ecdysozoa</taxon>
        <taxon>Arthropoda</taxon>
        <taxon>Hexapoda</taxon>
        <taxon>Insecta</taxon>
        <taxon>Pterygota</taxon>
        <taxon>Neoptera</taxon>
        <taxon>Endopterygota</taxon>
        <taxon>Diptera</taxon>
        <taxon>Brachycera</taxon>
        <taxon>Muscomorpha</taxon>
        <taxon>Ephydroidea</taxon>
        <taxon>Drosophilidae</taxon>
        <taxon>Drosophila</taxon>
        <taxon>Sophophora</taxon>
    </lineage>
</organism>
<protein>
    <recommendedName>
        <fullName>Protein TIS11</fullName>
    </recommendedName>
    <alternativeName>
        <fullName>dTIS11</fullName>
    </alternativeName>
</protein>